<evidence type="ECO:0000250" key="1">
    <source>
        <dbReference type="UniProtKB" id="A2BJX6"/>
    </source>
</evidence>
<evidence type="ECO:0000255" key="2">
    <source>
        <dbReference type="HAMAP-Rule" id="MF_00407"/>
    </source>
</evidence>
<evidence type="ECO:0000269" key="3">
    <source>
    </source>
</evidence>
<evidence type="ECO:0000303" key="4">
    <source>
    </source>
</evidence>
<evidence type="ECO:0000305" key="5"/>
<evidence type="ECO:0000305" key="6">
    <source>
    </source>
</evidence>
<comment type="function">
    <text evidence="3">DNA ligase that seals nicks in double-stranded DNA during DNA replication, DNA recombination and DNA repair. Can use both ATP and ADP.</text>
</comment>
<comment type="catalytic activity">
    <reaction evidence="2 3">
        <text>ATP + (deoxyribonucleotide)n-3'-hydroxyl + 5'-phospho-(deoxyribonucleotide)m = (deoxyribonucleotide)n+m + AMP + diphosphate.</text>
        <dbReference type="EC" id="6.5.1.7"/>
    </reaction>
</comment>
<comment type="catalytic activity">
    <reaction evidence="3">
        <text>ADP + (deoxyribonucleotide)n-3'-hydroxyl + 5'-phospho-(deoxyribonucleotide)m = (deoxyribonucleotide)n+m + AMP + phosphate.</text>
        <dbReference type="EC" id="6.5.1.7"/>
    </reaction>
</comment>
<comment type="catalytic activity">
    <reaction evidence="1">
        <text>GTP + (deoxyribonucleotide)n-3'-hydroxyl + 5'-phospho-(deoxyribonucleotide)m = (deoxyribonucleotide)n+m + GMP + diphosphate.</text>
        <dbReference type="EC" id="6.5.1.7"/>
    </reaction>
</comment>
<comment type="cofactor">
    <cofactor evidence="3">
        <name>Mg(2+)</name>
        <dbReference type="ChEBI" id="CHEBI:18420"/>
    </cofactor>
    <cofactor evidence="3">
        <name>Mn(2+)</name>
        <dbReference type="ChEBI" id="CHEBI:29035"/>
    </cofactor>
</comment>
<comment type="activity regulation">
    <text evidence="3">Inhibited by Ca(2+) and Zn(2+).</text>
</comment>
<comment type="biophysicochemical properties">
    <phDependence>
        <text evidence="3">Optimum pH is 6.5.</text>
    </phDependence>
    <temperatureDependence>
        <text evidence="3">Optimum temperature is 75 degrees Celsius. Activity declines at temperatures from 75 to 80 degrees Celsius.</text>
    </temperatureDependence>
</comment>
<comment type="similarity">
    <text evidence="2 5">Belongs to the ATP-dependent DNA ligase family.</text>
</comment>
<comment type="sequence caution" evidence="5">
    <conflict type="erroneous initiation">
        <sequence resource="EMBL-CDS" id="ABE27150"/>
    </conflict>
    <text>Extended N-terminus.</text>
</comment>
<comment type="sequence caution" evidence="5">
    <conflict type="erroneous initiation">
        <sequence resource="EMBL-CDS" id="ABN70409"/>
    </conflict>
    <text>Extended N-terminus.</text>
</comment>
<name>DNLI_STAMF</name>
<reference key="1">
    <citation type="journal article" date="2007" name="J. Biotechnol.">
        <title>Cloning and expression of a DNA ligase from the hyperthermophilic archaeon Staphylothermus marinus and properties of the enzyme.</title>
        <authorList>
            <person name="Seo M.S."/>
            <person name="Kim Y.J."/>
            <person name="Choi J.J."/>
            <person name="Lee M.S."/>
            <person name="Kim J.H."/>
            <person name="Lee J.H."/>
            <person name="Kwon S.T."/>
        </authorList>
    </citation>
    <scope>NUCLEOTIDE SEQUENCE [GENOMIC DNA]</scope>
    <scope>FUNCTION</scope>
    <scope>CATALYTIC ACTIVITY</scope>
    <scope>COFACTOR</scope>
    <scope>ACTIVITY REGULATION</scope>
    <scope>BIOPHYSICOCHEMICAL PROPERTIES</scope>
    <source>
        <strain>ATCC 43588 / DSM 3639 / JCM 9404 / F1</strain>
    </source>
</reference>
<reference key="2">
    <citation type="journal article" date="2009" name="BMC Genomics">
        <title>The complete genome sequence of Staphylothermus marinus reveals differences in sulfur metabolism among heterotrophic Crenarchaeota.</title>
        <authorList>
            <person name="Anderson I.J."/>
            <person name="Dharmarajan L."/>
            <person name="Rodriguez J."/>
            <person name="Hooper S."/>
            <person name="Porat I."/>
            <person name="Ulrich L.E."/>
            <person name="Elkins J.G."/>
            <person name="Mavromatis K."/>
            <person name="Sun H."/>
            <person name="Land M."/>
            <person name="Lapidus A."/>
            <person name="Lucas S."/>
            <person name="Barry K."/>
            <person name="Huber H."/>
            <person name="Zhulin I.B."/>
            <person name="Whitman W.B."/>
            <person name="Mukhopadhyay B."/>
            <person name="Woese C."/>
            <person name="Bristow J."/>
            <person name="Kyrpides N."/>
        </authorList>
    </citation>
    <scope>NUCLEOTIDE SEQUENCE [LARGE SCALE GENOMIC DNA]</scope>
    <source>
        <strain>ATCC 43588 / DSM 3639 / JCM 9404 / F1</strain>
    </source>
</reference>
<reference key="3">
    <citation type="journal article" date="2009" name="Stand. Genomic Sci.">
        <title>Complete genome sequence of Staphylothermus marinus Stetter and Fiala 1986 type strain F1.</title>
        <authorList>
            <person name="Anderson I.J."/>
            <person name="Sun H."/>
            <person name="Lapidus A."/>
            <person name="Copeland A."/>
            <person name="Glavina Del Rio T."/>
            <person name="Tice H."/>
            <person name="Dalin E."/>
            <person name="Lucas S."/>
            <person name="Barry K."/>
            <person name="Land M."/>
            <person name="Richardson P."/>
            <person name="Huber H."/>
            <person name="Kyrpides N.C."/>
        </authorList>
    </citation>
    <scope>NUCLEOTIDE SEQUENCE [LARGE SCALE GENOMIC DNA]</scope>
    <source>
        <strain>ATCC 43588 / DSM 3639 / JCM 9404 / F1</strain>
    </source>
</reference>
<gene>
    <name evidence="2" type="primary">lig</name>
    <name type="ordered locus">Smar_1318</name>
</gene>
<protein>
    <recommendedName>
        <fullName evidence="2 4">DNA ligase</fullName>
        <ecNumber evidence="6">6.5.1.7</ecNumber>
    </recommendedName>
    <alternativeName>
        <fullName evidence="5">Polydeoxyribonucleotide synthase [ATP/ADP]</fullName>
    </alternativeName>
</protein>
<sequence>MPFRELADTFERIEIITSRTQMTVLLVNLFKKTPPEIIDKVVYLLQGRLWPDWKGLPELGVGEKMLIKAIALATQSTESEVESLYKSLGDLGKAAEKLKAIYEEKLKKGAMSILAFVPVKRELTVSQVYETLSRVALATGEGSRDIKLKLLAGLLSDASPKEAKYIIRFVEGRLRLGIGDATIMDALAIVYGGGAHARPIVERAYNLRADLGHIAKILATQGLNALKGIKPQVGIPIRPMLAERLNNPVEILKKVGGIAFVEYKYDGERAQIHKLGDKIWIYSRRLENITHQYPDVVDYARKYIKANEAIVEGEIVAYDPDTGELRPFQELMHRKRKHDIHIAIKEVPVKVYLFDLLYVDGEDYTLKPLPERRAKLVEIIEQTETFQIAEYIRTNNPDELEKFFLKAIEDGAEGVMIKALHKNAIYQAGTRGWLWIKYKRDYKSEMIDTVDLVVIGAFYGRGRRGGKYGALLMASYNPDKDVFESVCKVGSGFKDEDIDKLPEMLKPYIIEHKHPRVVARMKPDVWVTPALVAEIIGAELTLSPLHTCCLDIIKPGVGISIRFPRFIRWRPDKGPEDATTSQELLEMYKRQLKKLSE</sequence>
<dbReference type="EC" id="6.5.1.7" evidence="6"/>
<dbReference type="EMBL" id="DQ451010">
    <property type="protein sequence ID" value="ABE27150.1"/>
    <property type="status" value="ALT_INIT"/>
    <property type="molecule type" value="Genomic_DNA"/>
</dbReference>
<dbReference type="EMBL" id="CP000575">
    <property type="protein sequence ID" value="ABN70409.1"/>
    <property type="status" value="ALT_INIT"/>
    <property type="molecule type" value="Genomic_DNA"/>
</dbReference>
<dbReference type="RefSeq" id="WP_244372521.1">
    <property type="nucleotide sequence ID" value="NC_009033.1"/>
</dbReference>
<dbReference type="SMR" id="A3DP49"/>
<dbReference type="STRING" id="399550.Smar_1318"/>
<dbReference type="GeneID" id="4906593"/>
<dbReference type="KEGG" id="smr:Smar_1318"/>
<dbReference type="eggNOG" id="arCOG01347">
    <property type="taxonomic scope" value="Archaea"/>
</dbReference>
<dbReference type="HOGENOM" id="CLU_005138_6_0_2"/>
<dbReference type="Proteomes" id="UP000000254">
    <property type="component" value="Chromosome"/>
</dbReference>
<dbReference type="GO" id="GO:0005524">
    <property type="term" value="F:ATP binding"/>
    <property type="evidence" value="ECO:0007669"/>
    <property type="project" value="UniProtKB-UniRule"/>
</dbReference>
<dbReference type="GO" id="GO:0003677">
    <property type="term" value="F:DNA binding"/>
    <property type="evidence" value="ECO:0007669"/>
    <property type="project" value="InterPro"/>
</dbReference>
<dbReference type="GO" id="GO:0003910">
    <property type="term" value="F:DNA ligase (ATP) activity"/>
    <property type="evidence" value="ECO:0007669"/>
    <property type="project" value="UniProtKB-UniRule"/>
</dbReference>
<dbReference type="GO" id="GO:0046872">
    <property type="term" value="F:metal ion binding"/>
    <property type="evidence" value="ECO:0007669"/>
    <property type="project" value="UniProtKB-KW"/>
</dbReference>
<dbReference type="GO" id="GO:0051301">
    <property type="term" value="P:cell division"/>
    <property type="evidence" value="ECO:0007669"/>
    <property type="project" value="UniProtKB-KW"/>
</dbReference>
<dbReference type="GO" id="GO:0071897">
    <property type="term" value="P:DNA biosynthetic process"/>
    <property type="evidence" value="ECO:0007669"/>
    <property type="project" value="InterPro"/>
</dbReference>
<dbReference type="GO" id="GO:0006310">
    <property type="term" value="P:DNA recombination"/>
    <property type="evidence" value="ECO:0007669"/>
    <property type="project" value="UniProtKB-UniRule"/>
</dbReference>
<dbReference type="GO" id="GO:0006281">
    <property type="term" value="P:DNA repair"/>
    <property type="evidence" value="ECO:0007669"/>
    <property type="project" value="UniProtKB-UniRule"/>
</dbReference>
<dbReference type="GO" id="GO:0006273">
    <property type="term" value="P:lagging strand elongation"/>
    <property type="evidence" value="ECO:0007669"/>
    <property type="project" value="TreeGrafter"/>
</dbReference>
<dbReference type="CDD" id="cd07901">
    <property type="entry name" value="Adenylation_DNA_ligase_Arch_LigB"/>
    <property type="match status" value="1"/>
</dbReference>
<dbReference type="CDD" id="cd07969">
    <property type="entry name" value="OBF_DNA_ligase_I"/>
    <property type="match status" value="1"/>
</dbReference>
<dbReference type="FunFam" id="1.10.3260.10:FF:000007">
    <property type="entry name" value="DNA ligase"/>
    <property type="match status" value="1"/>
</dbReference>
<dbReference type="FunFam" id="2.40.50.140:FF:000062">
    <property type="entry name" value="DNA ligase"/>
    <property type="match status" value="1"/>
</dbReference>
<dbReference type="FunFam" id="3.30.470.30:FF:000012">
    <property type="entry name" value="Probable DNA ligase"/>
    <property type="match status" value="1"/>
</dbReference>
<dbReference type="Gene3D" id="1.10.3260.10">
    <property type="entry name" value="DNA ligase, ATP-dependent, N-terminal domain"/>
    <property type="match status" value="1"/>
</dbReference>
<dbReference type="Gene3D" id="3.30.470.30">
    <property type="entry name" value="DNA ligase/mRNA capping enzyme"/>
    <property type="match status" value="1"/>
</dbReference>
<dbReference type="Gene3D" id="2.40.50.140">
    <property type="entry name" value="Nucleic acid-binding proteins"/>
    <property type="match status" value="1"/>
</dbReference>
<dbReference type="HAMAP" id="MF_00407">
    <property type="entry name" value="DNA_ligase"/>
    <property type="match status" value="1"/>
</dbReference>
<dbReference type="InterPro" id="IPR050191">
    <property type="entry name" value="ATP-dep_DNA_ligase"/>
</dbReference>
<dbReference type="InterPro" id="IPR022865">
    <property type="entry name" value="DNA_ligae_ATP-dep_bac/arc"/>
</dbReference>
<dbReference type="InterPro" id="IPR000977">
    <property type="entry name" value="DNA_ligase_ATP-dep"/>
</dbReference>
<dbReference type="InterPro" id="IPR012309">
    <property type="entry name" value="DNA_ligase_ATP-dep_C"/>
</dbReference>
<dbReference type="InterPro" id="IPR012310">
    <property type="entry name" value="DNA_ligase_ATP-dep_cent"/>
</dbReference>
<dbReference type="InterPro" id="IPR016059">
    <property type="entry name" value="DNA_ligase_ATP-dep_CS"/>
</dbReference>
<dbReference type="InterPro" id="IPR012308">
    <property type="entry name" value="DNA_ligase_ATP-dep_N"/>
</dbReference>
<dbReference type="InterPro" id="IPR036599">
    <property type="entry name" value="DNA_ligase_N_sf"/>
</dbReference>
<dbReference type="InterPro" id="IPR012340">
    <property type="entry name" value="NA-bd_OB-fold"/>
</dbReference>
<dbReference type="NCBIfam" id="TIGR00574">
    <property type="entry name" value="dnl1"/>
    <property type="match status" value="1"/>
</dbReference>
<dbReference type="PANTHER" id="PTHR45674:SF4">
    <property type="entry name" value="DNA LIGASE 1"/>
    <property type="match status" value="1"/>
</dbReference>
<dbReference type="PANTHER" id="PTHR45674">
    <property type="entry name" value="DNA LIGASE 1/3 FAMILY MEMBER"/>
    <property type="match status" value="1"/>
</dbReference>
<dbReference type="Pfam" id="PF04679">
    <property type="entry name" value="DNA_ligase_A_C"/>
    <property type="match status" value="1"/>
</dbReference>
<dbReference type="Pfam" id="PF01068">
    <property type="entry name" value="DNA_ligase_A_M"/>
    <property type="match status" value="1"/>
</dbReference>
<dbReference type="Pfam" id="PF04675">
    <property type="entry name" value="DNA_ligase_A_N"/>
    <property type="match status" value="1"/>
</dbReference>
<dbReference type="SUPFAM" id="SSF117018">
    <property type="entry name" value="ATP-dependent DNA ligase DNA-binding domain"/>
    <property type="match status" value="1"/>
</dbReference>
<dbReference type="SUPFAM" id="SSF56091">
    <property type="entry name" value="DNA ligase/mRNA capping enzyme, catalytic domain"/>
    <property type="match status" value="1"/>
</dbReference>
<dbReference type="SUPFAM" id="SSF50249">
    <property type="entry name" value="Nucleic acid-binding proteins"/>
    <property type="match status" value="1"/>
</dbReference>
<dbReference type="PROSITE" id="PS00697">
    <property type="entry name" value="DNA_LIGASE_A1"/>
    <property type="match status" value="1"/>
</dbReference>
<dbReference type="PROSITE" id="PS00333">
    <property type="entry name" value="DNA_LIGASE_A2"/>
    <property type="match status" value="1"/>
</dbReference>
<dbReference type="PROSITE" id="PS50160">
    <property type="entry name" value="DNA_LIGASE_A3"/>
    <property type="match status" value="1"/>
</dbReference>
<keyword id="KW-0067">ATP-binding</keyword>
<keyword id="KW-0131">Cell cycle</keyword>
<keyword id="KW-0132">Cell division</keyword>
<keyword id="KW-0227">DNA damage</keyword>
<keyword id="KW-0233">DNA recombination</keyword>
<keyword id="KW-0234">DNA repair</keyword>
<keyword id="KW-0235">DNA replication</keyword>
<keyword id="KW-0436">Ligase</keyword>
<keyword id="KW-0460">Magnesium</keyword>
<keyword id="KW-0464">Manganese</keyword>
<keyword id="KW-0479">Metal-binding</keyword>
<keyword id="KW-0547">Nucleotide-binding</keyword>
<keyword id="KW-1185">Reference proteome</keyword>
<accession>A3DP49</accession>
<accession>A3E0P8</accession>
<feature type="chain" id="PRO_0000365264" description="DNA ligase">
    <location>
        <begin position="1"/>
        <end position="597"/>
    </location>
</feature>
<feature type="active site" description="N6-AMP-lysine intermediate" evidence="2">
    <location>
        <position position="264"/>
    </location>
</feature>
<feature type="binding site" evidence="2">
    <location>
        <position position="262"/>
    </location>
    <ligand>
        <name>ATP</name>
        <dbReference type="ChEBI" id="CHEBI:30616"/>
    </ligand>
</feature>
<feature type="binding site" evidence="2">
    <location>
        <position position="269"/>
    </location>
    <ligand>
        <name>ATP</name>
        <dbReference type="ChEBI" id="CHEBI:30616"/>
    </ligand>
</feature>
<feature type="binding site" evidence="2">
    <location>
        <position position="284"/>
    </location>
    <ligand>
        <name>ATP</name>
        <dbReference type="ChEBI" id="CHEBI:30616"/>
    </ligand>
</feature>
<feature type="binding site" evidence="2">
    <location>
        <position position="314"/>
    </location>
    <ligand>
        <name>ATP</name>
        <dbReference type="ChEBI" id="CHEBI:30616"/>
    </ligand>
</feature>
<feature type="binding site" evidence="2">
    <location>
        <position position="354"/>
    </location>
    <ligand>
        <name>ATP</name>
        <dbReference type="ChEBI" id="CHEBI:30616"/>
    </ligand>
</feature>
<feature type="binding site" evidence="2">
    <location>
        <position position="431"/>
    </location>
    <ligand>
        <name>ATP</name>
        <dbReference type="ChEBI" id="CHEBI:30616"/>
    </ligand>
</feature>
<feature type="binding site" evidence="2">
    <location>
        <position position="437"/>
    </location>
    <ligand>
        <name>ATP</name>
        <dbReference type="ChEBI" id="CHEBI:30616"/>
    </ligand>
</feature>
<proteinExistence type="evidence at protein level"/>
<organism>
    <name type="scientific">Staphylothermus marinus (strain ATCC 43588 / DSM 3639 / JCM 9404 / F1)</name>
    <dbReference type="NCBI Taxonomy" id="399550"/>
    <lineage>
        <taxon>Archaea</taxon>
        <taxon>Thermoproteota</taxon>
        <taxon>Thermoprotei</taxon>
        <taxon>Desulfurococcales</taxon>
        <taxon>Desulfurococcaceae</taxon>
        <taxon>Staphylothermus</taxon>
    </lineage>
</organism>